<proteinExistence type="inferred from homology"/>
<protein>
    <recommendedName>
        <fullName>Putative alpha-L-fucosidase</fullName>
        <ecNumber>3.2.1.51</ecNumber>
    </recommendedName>
    <alternativeName>
        <fullName>Alpha-L-fucoside fucohydrolase</fullName>
    </alternativeName>
</protein>
<accession>P49713</accession>
<sequence>MIFLIFSILFLHLANCDYTPDWESLDNRPLPSWYDDSKFGIFCHWGLYSVPAFRSEWMWWYWKGTQPDKDVVNFVDKNYKPGTTYADFAKDFTAEYFNANQFAETVKTSGARYFVFTSKHHEGFTMWPSRTSWNWNSMDIGPKRDIVGELRDAFKKTDVHFGLYFSQFEWFHPMFLDDGKFNTTFYPEQVSYPQMIDIVTKYNPEVVWSDGEWDKSDDYWKAKEFLAWLYNSSPVKDQVVVNDRWGTGTMGKHGGFMTYSDHYDPGKLLEKKWENCMTLDKHSWGNRRDMKASEVNTAYEIIEQLARTIACNGNLLLNVGPNMHGQIPAIFEDRLEEIGRFVNITSEAIFGTRPWIHQNDTSASNVWYTSKYSSGKKPLKNLYQNVYNFQLEEHTIVYAWILDTSHEQFELKSVKTTKNTTATILGTDVVLTGFEESDSMIILSSKIDWKKLPRRDIIVLKIEKAASYLRNPLMSTNEHHVQ</sequence>
<gene>
    <name type="ORF">W03G11.3</name>
</gene>
<keyword id="KW-0325">Glycoprotein</keyword>
<keyword id="KW-0326">Glycosidase</keyword>
<keyword id="KW-0378">Hydrolase</keyword>
<keyword id="KW-1185">Reference proteome</keyword>
<keyword id="KW-0732">Signal</keyword>
<evidence type="ECO:0000250" key="1"/>
<evidence type="ECO:0000255" key="2"/>
<evidence type="ECO:0000255" key="3">
    <source>
        <dbReference type="PROSITE-ProRule" id="PRU10054"/>
    </source>
</evidence>
<evidence type="ECO:0000305" key="4"/>
<dbReference type="EC" id="3.2.1.51"/>
<dbReference type="EMBL" id="Z67738">
    <property type="protein sequence ID" value="CAA91546.2"/>
    <property type="molecule type" value="Genomic_DNA"/>
</dbReference>
<dbReference type="PIR" id="T26127">
    <property type="entry name" value="T26127"/>
</dbReference>
<dbReference type="RefSeq" id="NP_510020.2">
    <property type="nucleotide sequence ID" value="NM_077619.6"/>
</dbReference>
<dbReference type="SMR" id="P49713"/>
<dbReference type="FunCoup" id="P49713">
    <property type="interactions" value="809"/>
</dbReference>
<dbReference type="STRING" id="6239.W03G11.3.1"/>
<dbReference type="CAZy" id="GH29">
    <property type="family name" value="Glycoside Hydrolase Family 29"/>
</dbReference>
<dbReference type="PaxDb" id="6239-W03G11.3"/>
<dbReference type="PeptideAtlas" id="P49713"/>
<dbReference type="EnsemblMetazoa" id="W03G11.3.1">
    <property type="protein sequence ID" value="W03G11.3.1"/>
    <property type="gene ID" value="WBGene00012225"/>
</dbReference>
<dbReference type="GeneID" id="189173"/>
<dbReference type="KEGG" id="cel:CELE_W03G11.3"/>
<dbReference type="UCSC" id="W03G11.3">
    <property type="organism name" value="c. elegans"/>
</dbReference>
<dbReference type="AGR" id="WB:WBGene00012225"/>
<dbReference type="CTD" id="189173"/>
<dbReference type="WormBase" id="W03G11.3">
    <property type="protein sequence ID" value="CE37417"/>
    <property type="gene ID" value="WBGene00012225"/>
</dbReference>
<dbReference type="eggNOG" id="KOG3340">
    <property type="taxonomic scope" value="Eukaryota"/>
</dbReference>
<dbReference type="GeneTree" id="ENSGT00440000035378"/>
<dbReference type="HOGENOM" id="CLU_002934_1_2_1"/>
<dbReference type="InParanoid" id="P49713"/>
<dbReference type="OMA" id="ILWYDVP"/>
<dbReference type="OrthoDB" id="6039950at2759"/>
<dbReference type="PhylomeDB" id="P49713"/>
<dbReference type="BRENDA" id="3.2.1.51">
    <property type="organism ID" value="1045"/>
</dbReference>
<dbReference type="Reactome" id="R-CEL-381426">
    <property type="pathway name" value="Regulation of Insulin-like Growth Factor (IGF) transport and uptake by Insulin-like Growth Factor Binding Proteins (IGFBPs)"/>
</dbReference>
<dbReference type="Reactome" id="R-CEL-6798695">
    <property type="pathway name" value="Neutrophil degranulation"/>
</dbReference>
<dbReference type="Reactome" id="R-CEL-8957275">
    <property type="pathway name" value="Post-translational protein phosphorylation"/>
</dbReference>
<dbReference type="Reactome" id="R-CEL-975578">
    <property type="pathway name" value="Reactions specific to the complex N-glycan synthesis pathway"/>
</dbReference>
<dbReference type="PRO" id="PR:P49713"/>
<dbReference type="Proteomes" id="UP000001940">
    <property type="component" value="Chromosome X"/>
</dbReference>
<dbReference type="Bgee" id="WBGene00012225">
    <property type="expression patterns" value="Expressed in adult organism and 3 other cell types or tissues"/>
</dbReference>
<dbReference type="GO" id="GO:0005764">
    <property type="term" value="C:lysosome"/>
    <property type="evidence" value="ECO:0000318"/>
    <property type="project" value="GO_Central"/>
</dbReference>
<dbReference type="GO" id="GO:0004560">
    <property type="term" value="F:alpha-L-fucosidase activity"/>
    <property type="evidence" value="ECO:0000318"/>
    <property type="project" value="GO_Central"/>
</dbReference>
<dbReference type="GO" id="GO:0006004">
    <property type="term" value="P:fucose metabolic process"/>
    <property type="evidence" value="ECO:0000318"/>
    <property type="project" value="GO_Central"/>
</dbReference>
<dbReference type="GO" id="GO:0016139">
    <property type="term" value="P:glycoside catabolic process"/>
    <property type="evidence" value="ECO:0000318"/>
    <property type="project" value="GO_Central"/>
</dbReference>
<dbReference type="FunFam" id="3.20.20.80:FF:000027">
    <property type="entry name" value="Alpha-L-fucosidase"/>
    <property type="match status" value="1"/>
</dbReference>
<dbReference type="Gene3D" id="3.20.20.80">
    <property type="entry name" value="Glycosidases"/>
    <property type="match status" value="1"/>
</dbReference>
<dbReference type="InterPro" id="IPR016286">
    <property type="entry name" value="FUC_metazoa-typ"/>
</dbReference>
<dbReference type="InterPro" id="IPR000933">
    <property type="entry name" value="Glyco_hydro_29"/>
</dbReference>
<dbReference type="InterPro" id="IPR018526">
    <property type="entry name" value="Glyco_hydro_29_CS"/>
</dbReference>
<dbReference type="InterPro" id="IPR017853">
    <property type="entry name" value="Glycoside_hydrolase_SF"/>
</dbReference>
<dbReference type="PANTHER" id="PTHR10030">
    <property type="entry name" value="ALPHA-L-FUCOSIDASE"/>
    <property type="match status" value="1"/>
</dbReference>
<dbReference type="PANTHER" id="PTHR10030:SF37">
    <property type="entry name" value="ALPHA-L-FUCOSIDASE-RELATED"/>
    <property type="match status" value="1"/>
</dbReference>
<dbReference type="Pfam" id="PF01120">
    <property type="entry name" value="Alpha_L_fucos"/>
    <property type="match status" value="1"/>
</dbReference>
<dbReference type="PIRSF" id="PIRSF001092">
    <property type="entry name" value="Alpha-L-fucosidase"/>
    <property type="match status" value="1"/>
</dbReference>
<dbReference type="PRINTS" id="PR00741">
    <property type="entry name" value="GLHYDRLASE29"/>
</dbReference>
<dbReference type="SMART" id="SM00812">
    <property type="entry name" value="Alpha_L_fucos"/>
    <property type="match status" value="1"/>
</dbReference>
<dbReference type="SUPFAM" id="SSF51445">
    <property type="entry name" value="(Trans)glycosidases"/>
    <property type="match status" value="1"/>
</dbReference>
<dbReference type="PROSITE" id="PS00385">
    <property type="entry name" value="ALPHA_L_FUCOSIDASE"/>
    <property type="match status" value="1"/>
</dbReference>
<reference key="1">
    <citation type="journal article" date="1998" name="Science">
        <title>Genome sequence of the nematode C. elegans: a platform for investigating biology.</title>
        <authorList>
            <consortium name="The C. elegans sequencing consortium"/>
        </authorList>
    </citation>
    <scope>NUCLEOTIDE SEQUENCE [LARGE SCALE GENOMIC DNA]</scope>
    <source>
        <strain>Bristol N2</strain>
    </source>
</reference>
<name>FUCO_CAEEL</name>
<comment type="function">
    <text evidence="1">Alpha-L-fucosidase is responsible for hydrolyzing the alpha-1,6-linked fucose joined to the reducing-end N-acetylglucosamine of the carbohydrate moieties of glycoproteins.</text>
</comment>
<comment type="catalytic activity">
    <reaction evidence="3">
        <text>an alpha-L-fucoside + H2O = L-fucose + an alcohol</text>
        <dbReference type="Rhea" id="RHEA:12288"/>
        <dbReference type="ChEBI" id="CHEBI:2181"/>
        <dbReference type="ChEBI" id="CHEBI:15377"/>
        <dbReference type="ChEBI" id="CHEBI:28349"/>
        <dbReference type="ChEBI" id="CHEBI:30879"/>
        <dbReference type="EC" id="3.2.1.51"/>
    </reaction>
</comment>
<comment type="similarity">
    <text evidence="4">Belongs to the glycosyl hydrolase 29 family.</text>
</comment>
<organism>
    <name type="scientific">Caenorhabditis elegans</name>
    <dbReference type="NCBI Taxonomy" id="6239"/>
    <lineage>
        <taxon>Eukaryota</taxon>
        <taxon>Metazoa</taxon>
        <taxon>Ecdysozoa</taxon>
        <taxon>Nematoda</taxon>
        <taxon>Chromadorea</taxon>
        <taxon>Rhabditida</taxon>
        <taxon>Rhabditina</taxon>
        <taxon>Rhabditomorpha</taxon>
        <taxon>Rhabditoidea</taxon>
        <taxon>Rhabditidae</taxon>
        <taxon>Peloderinae</taxon>
        <taxon>Caenorhabditis</taxon>
    </lineage>
</organism>
<feature type="signal peptide" evidence="2">
    <location>
        <begin position="1"/>
        <end position="16"/>
    </location>
</feature>
<feature type="chain" id="PRO_0000010316" description="Putative alpha-L-fucosidase">
    <location>
        <begin position="17"/>
        <end position="482"/>
    </location>
</feature>
<feature type="site" description="May be important for catalysis" evidence="3">
    <location>
        <position position="276"/>
    </location>
</feature>
<feature type="glycosylation site" description="N-linked (GlcNAc...) asparagine" evidence="2">
    <location>
        <position position="182"/>
    </location>
</feature>
<feature type="glycosylation site" description="N-linked (GlcNAc...) asparagine" evidence="2">
    <location>
        <position position="343"/>
    </location>
</feature>
<feature type="glycosylation site" description="N-linked (GlcNAc...) asparagine" evidence="2">
    <location>
        <position position="359"/>
    </location>
</feature>
<feature type="glycosylation site" description="N-linked (GlcNAc...) asparagine" evidence="2">
    <location>
        <position position="419"/>
    </location>
</feature>